<name>CYSI_BACLD</name>
<sequence length="572" mass="64946">MGNEILKAPEGPPSDVERIKKESDYLRGTLKESMLEPLSAGISDDDNRLMKHHGSYLQDDRDLRNERQKQKLEPAYQFMLRVRMPGGVATPEQWLVMDELARKYGNGTLKLTTRETFQMHGILKWNMKKTIQSIHSAMLDTIAACGDVNRNVMCTSNPYQSEIHREVYEWSKKLSDDLLPRTRAYHEIWLDEEKVAGTPDADEVEPMYGPLYLPRKFKIGIAVPPSNDIDVFSQDLGFIAIVEDDKLIGFNVAIGGGMGMTHGDKATYPQLAKVIGFCKPEQLYDVAEKTITIQRDYGNRSVRKNARFKYTVDRLGLETVKNELENRLGWSLAEAKPYHFEHNGDRYGWVKGVKGRWHFTMFVEGGRVTDYDDYKLMTGLREIAKVHTGDIRLTANQNLIIANVTSQKKKKISELIEQFGLTDGKHYTALRRSSIACVALPTCGLAMAEAERYLPKLIDKIDEIVEENGLKNEEITIRMTGCPNGCARHALGEIGFIGKAPGKYNMYLGAAFDGSRLSKMYRENIGEEEILKELRNILPRYAKERNEGERFGDFVIRAGIVKETTDGTNFHD</sequence>
<comment type="function">
    <text evidence="1">Component of the sulfite reductase complex that catalyzes the 6-electron reduction of sulfite to sulfide. This is one of several activities required for the biosynthesis of L-cysteine from sulfate.</text>
</comment>
<comment type="catalytic activity">
    <reaction evidence="1">
        <text>hydrogen sulfide + 3 NADP(+) + 3 H2O = sulfite + 3 NADPH + 4 H(+)</text>
        <dbReference type="Rhea" id="RHEA:13801"/>
        <dbReference type="ChEBI" id="CHEBI:15377"/>
        <dbReference type="ChEBI" id="CHEBI:15378"/>
        <dbReference type="ChEBI" id="CHEBI:17359"/>
        <dbReference type="ChEBI" id="CHEBI:29919"/>
        <dbReference type="ChEBI" id="CHEBI:57783"/>
        <dbReference type="ChEBI" id="CHEBI:58349"/>
        <dbReference type="EC" id="1.8.1.2"/>
    </reaction>
</comment>
<comment type="cofactor">
    <cofactor evidence="1">
        <name>siroheme</name>
        <dbReference type="ChEBI" id="CHEBI:60052"/>
    </cofactor>
    <text evidence="1">Binds 1 siroheme per subunit.</text>
</comment>
<comment type="cofactor">
    <cofactor evidence="1">
        <name>[4Fe-4S] cluster</name>
        <dbReference type="ChEBI" id="CHEBI:49883"/>
    </cofactor>
    <text evidence="1">Binds 1 [4Fe-4S] cluster per subunit.</text>
</comment>
<comment type="pathway">
    <text evidence="1">Sulfur metabolism; hydrogen sulfide biosynthesis; hydrogen sulfide from sulfite (NADPH route): step 1/1.</text>
</comment>
<comment type="subunit">
    <text evidence="1">Alpha(8)-beta(8). The alpha component is a flavoprotein, the beta component is a hemoprotein.</text>
</comment>
<comment type="similarity">
    <text evidence="1">Belongs to the nitrite and sulfite reductase 4Fe-4S domain family.</text>
</comment>
<gene>
    <name evidence="1" type="primary">cysI</name>
    <name type="ordered locus">BLi01303</name>
    <name type="ordered locus">BL01950</name>
</gene>
<protein>
    <recommendedName>
        <fullName evidence="1">Sulfite reductase [NADPH] hemoprotein beta-component</fullName>
        <shortName evidence="1">SiR-HP</shortName>
        <shortName evidence="1">SiRHP</shortName>
        <ecNumber evidence="1">1.8.1.2</ecNumber>
    </recommendedName>
</protein>
<dbReference type="EC" id="1.8.1.2" evidence="1"/>
<dbReference type="EMBL" id="CP000002">
    <property type="protein sequence ID" value="AAU22860.1"/>
    <property type="molecule type" value="Genomic_DNA"/>
</dbReference>
<dbReference type="EMBL" id="AE017333">
    <property type="protein sequence ID" value="AAU40207.1"/>
    <property type="molecule type" value="Genomic_DNA"/>
</dbReference>
<dbReference type="RefSeq" id="WP_003180762.1">
    <property type="nucleotide sequence ID" value="NC_006322.1"/>
</dbReference>
<dbReference type="SMR" id="Q65L57"/>
<dbReference type="STRING" id="279010.BL01950"/>
<dbReference type="GeneID" id="92862113"/>
<dbReference type="KEGG" id="bld:BLi01303"/>
<dbReference type="KEGG" id="bli:BL01950"/>
<dbReference type="eggNOG" id="COG0155">
    <property type="taxonomic scope" value="Bacteria"/>
</dbReference>
<dbReference type="HOGENOM" id="CLU_001975_3_2_9"/>
<dbReference type="UniPathway" id="UPA00140">
    <property type="reaction ID" value="UER00207"/>
</dbReference>
<dbReference type="Proteomes" id="UP000000606">
    <property type="component" value="Chromosome"/>
</dbReference>
<dbReference type="GO" id="GO:0009337">
    <property type="term" value="C:sulfite reductase complex (NADPH)"/>
    <property type="evidence" value="ECO:0007669"/>
    <property type="project" value="InterPro"/>
</dbReference>
<dbReference type="GO" id="GO:0051539">
    <property type="term" value="F:4 iron, 4 sulfur cluster binding"/>
    <property type="evidence" value="ECO:0007669"/>
    <property type="project" value="UniProtKB-KW"/>
</dbReference>
<dbReference type="GO" id="GO:0020037">
    <property type="term" value="F:heme binding"/>
    <property type="evidence" value="ECO:0007669"/>
    <property type="project" value="InterPro"/>
</dbReference>
<dbReference type="GO" id="GO:0046872">
    <property type="term" value="F:metal ion binding"/>
    <property type="evidence" value="ECO:0007669"/>
    <property type="project" value="UniProtKB-KW"/>
</dbReference>
<dbReference type="GO" id="GO:0050661">
    <property type="term" value="F:NADP binding"/>
    <property type="evidence" value="ECO:0007669"/>
    <property type="project" value="InterPro"/>
</dbReference>
<dbReference type="GO" id="GO:0050311">
    <property type="term" value="F:sulfite reductase (ferredoxin) activity"/>
    <property type="evidence" value="ECO:0007669"/>
    <property type="project" value="TreeGrafter"/>
</dbReference>
<dbReference type="GO" id="GO:0004783">
    <property type="term" value="F:sulfite reductase (NADPH) activity"/>
    <property type="evidence" value="ECO:0007669"/>
    <property type="project" value="UniProtKB-UniRule"/>
</dbReference>
<dbReference type="GO" id="GO:0019344">
    <property type="term" value="P:cysteine biosynthetic process"/>
    <property type="evidence" value="ECO:0007669"/>
    <property type="project" value="UniProtKB-KW"/>
</dbReference>
<dbReference type="GO" id="GO:0070814">
    <property type="term" value="P:hydrogen sulfide biosynthetic process"/>
    <property type="evidence" value="ECO:0007669"/>
    <property type="project" value="UniProtKB-UniRule"/>
</dbReference>
<dbReference type="GO" id="GO:0000103">
    <property type="term" value="P:sulfate assimilation"/>
    <property type="evidence" value="ECO:0007669"/>
    <property type="project" value="UniProtKB-UniRule"/>
</dbReference>
<dbReference type="FunFam" id="3.30.413.10:FF:000003">
    <property type="entry name" value="Sulfite reductase [NADPH] hemoprotein beta-component"/>
    <property type="match status" value="1"/>
</dbReference>
<dbReference type="FunFam" id="3.30.413.10:FF:000004">
    <property type="entry name" value="Sulfite reductase [NADPH] hemoprotein beta-component"/>
    <property type="match status" value="1"/>
</dbReference>
<dbReference type="Gene3D" id="3.30.413.10">
    <property type="entry name" value="Sulfite Reductase Hemoprotein, domain 1"/>
    <property type="match status" value="2"/>
</dbReference>
<dbReference type="HAMAP" id="MF_01540">
    <property type="entry name" value="CysI"/>
    <property type="match status" value="1"/>
</dbReference>
<dbReference type="InterPro" id="IPR011786">
    <property type="entry name" value="CysI"/>
</dbReference>
<dbReference type="InterPro" id="IPR005117">
    <property type="entry name" value="NiRdtase/SiRdtase_haem-b_fer"/>
</dbReference>
<dbReference type="InterPro" id="IPR036136">
    <property type="entry name" value="Nit/Sulf_reduc_fer-like_dom_sf"/>
</dbReference>
<dbReference type="InterPro" id="IPR006067">
    <property type="entry name" value="NO2/SO3_Rdtase_4Fe4S_dom"/>
</dbReference>
<dbReference type="InterPro" id="IPR045169">
    <property type="entry name" value="NO2/SO3_Rdtase_4Fe4S_prot"/>
</dbReference>
<dbReference type="InterPro" id="IPR045854">
    <property type="entry name" value="NO2/SO3_Rdtase_4Fe4S_sf"/>
</dbReference>
<dbReference type="InterPro" id="IPR006066">
    <property type="entry name" value="NO2/SO3_Rdtase_FeS/sirohaem_BS"/>
</dbReference>
<dbReference type="NCBIfam" id="TIGR02041">
    <property type="entry name" value="CysI"/>
    <property type="match status" value="1"/>
</dbReference>
<dbReference type="NCBIfam" id="NF010029">
    <property type="entry name" value="PRK13504.1"/>
    <property type="match status" value="1"/>
</dbReference>
<dbReference type="PANTHER" id="PTHR11493:SF47">
    <property type="entry name" value="SULFITE REDUCTASE [NADPH] SUBUNIT BETA"/>
    <property type="match status" value="1"/>
</dbReference>
<dbReference type="PANTHER" id="PTHR11493">
    <property type="entry name" value="SULFITE REDUCTASE [NADPH] SUBUNIT BETA-RELATED"/>
    <property type="match status" value="1"/>
</dbReference>
<dbReference type="Pfam" id="PF01077">
    <property type="entry name" value="NIR_SIR"/>
    <property type="match status" value="1"/>
</dbReference>
<dbReference type="Pfam" id="PF03460">
    <property type="entry name" value="NIR_SIR_ferr"/>
    <property type="match status" value="2"/>
</dbReference>
<dbReference type="PRINTS" id="PR00397">
    <property type="entry name" value="SIROHAEM"/>
</dbReference>
<dbReference type="SUPFAM" id="SSF56014">
    <property type="entry name" value="Nitrite and sulphite reductase 4Fe-4S domain-like"/>
    <property type="match status" value="2"/>
</dbReference>
<dbReference type="SUPFAM" id="SSF55124">
    <property type="entry name" value="Nitrite/Sulfite reductase N-terminal domain-like"/>
    <property type="match status" value="2"/>
</dbReference>
<dbReference type="PROSITE" id="PS00365">
    <property type="entry name" value="NIR_SIR"/>
    <property type="match status" value="1"/>
</dbReference>
<evidence type="ECO:0000255" key="1">
    <source>
        <dbReference type="HAMAP-Rule" id="MF_01540"/>
    </source>
</evidence>
<feature type="chain" id="PRO_0000388476" description="Sulfite reductase [NADPH] hemoprotein beta-component">
    <location>
        <begin position="1"/>
        <end position="572"/>
    </location>
</feature>
<feature type="binding site" evidence="1">
    <location>
        <position position="437"/>
    </location>
    <ligand>
        <name>[4Fe-4S] cluster</name>
        <dbReference type="ChEBI" id="CHEBI:49883"/>
    </ligand>
</feature>
<feature type="binding site" evidence="1">
    <location>
        <position position="443"/>
    </location>
    <ligand>
        <name>[4Fe-4S] cluster</name>
        <dbReference type="ChEBI" id="CHEBI:49883"/>
    </ligand>
</feature>
<feature type="binding site" evidence="1">
    <location>
        <position position="482"/>
    </location>
    <ligand>
        <name>[4Fe-4S] cluster</name>
        <dbReference type="ChEBI" id="CHEBI:49883"/>
    </ligand>
</feature>
<feature type="binding site" evidence="1">
    <location>
        <position position="486"/>
    </location>
    <ligand>
        <name>[4Fe-4S] cluster</name>
        <dbReference type="ChEBI" id="CHEBI:49883"/>
    </ligand>
</feature>
<feature type="binding site" description="axial binding residue" evidence="1">
    <location>
        <position position="486"/>
    </location>
    <ligand>
        <name>siroheme</name>
        <dbReference type="ChEBI" id="CHEBI:60052"/>
    </ligand>
    <ligandPart>
        <name>Fe</name>
        <dbReference type="ChEBI" id="CHEBI:18248"/>
    </ligandPart>
</feature>
<organism>
    <name type="scientific">Bacillus licheniformis (strain ATCC 14580 / DSM 13 / JCM 2505 / CCUG 7422 / NBRC 12200 / NCIMB 9375 / NCTC 10341 / NRRL NRS-1264 / Gibson 46)</name>
    <dbReference type="NCBI Taxonomy" id="279010"/>
    <lineage>
        <taxon>Bacteria</taxon>
        <taxon>Bacillati</taxon>
        <taxon>Bacillota</taxon>
        <taxon>Bacilli</taxon>
        <taxon>Bacillales</taxon>
        <taxon>Bacillaceae</taxon>
        <taxon>Bacillus</taxon>
    </lineage>
</organism>
<reference key="1">
    <citation type="journal article" date="2004" name="J. Mol. Microbiol. Biotechnol.">
        <title>The complete genome sequence of Bacillus licheniformis DSM13, an organism with great industrial potential.</title>
        <authorList>
            <person name="Veith B."/>
            <person name="Herzberg C."/>
            <person name="Steckel S."/>
            <person name="Feesche J."/>
            <person name="Maurer K.H."/>
            <person name="Ehrenreich P."/>
            <person name="Baeumer S."/>
            <person name="Henne A."/>
            <person name="Liesegang H."/>
            <person name="Merkl R."/>
            <person name="Ehrenreich A."/>
            <person name="Gottschalk G."/>
        </authorList>
    </citation>
    <scope>NUCLEOTIDE SEQUENCE [LARGE SCALE GENOMIC DNA]</scope>
    <source>
        <strain>ATCC 14580 / DSM 13 / JCM 2505 / CCUG 7422 / NBRC 12200 / NCIMB 9375 / NCTC 10341 / NRRL NRS-1264 / Gibson 46</strain>
    </source>
</reference>
<reference key="2">
    <citation type="journal article" date="2004" name="Genome Biol.">
        <title>Complete genome sequence of the industrial bacterium Bacillus licheniformis and comparisons with closely related Bacillus species.</title>
        <authorList>
            <person name="Rey M.W."/>
            <person name="Ramaiya P."/>
            <person name="Nelson B.A."/>
            <person name="Brody-Karpin S.D."/>
            <person name="Zaretsky E.J."/>
            <person name="Tang M."/>
            <person name="Lopez de Leon A."/>
            <person name="Xiang H."/>
            <person name="Gusti V."/>
            <person name="Clausen I.G."/>
            <person name="Olsen P.B."/>
            <person name="Rasmussen M.D."/>
            <person name="Andersen J.T."/>
            <person name="Joergensen P.L."/>
            <person name="Larsen T.S."/>
            <person name="Sorokin A."/>
            <person name="Bolotin A."/>
            <person name="Lapidus A."/>
            <person name="Galleron N."/>
            <person name="Ehrlich S.D."/>
            <person name="Berka R.M."/>
        </authorList>
    </citation>
    <scope>NUCLEOTIDE SEQUENCE [LARGE SCALE GENOMIC DNA]</scope>
    <source>
        <strain>ATCC 14580 / DSM 13 / JCM 2505 / CCUG 7422 / NBRC 12200 / NCIMB 9375 / NCTC 10341 / NRRL NRS-1264 / Gibson 46</strain>
    </source>
</reference>
<keyword id="KW-0004">4Fe-4S</keyword>
<keyword id="KW-0028">Amino-acid biosynthesis</keyword>
<keyword id="KW-0198">Cysteine biosynthesis</keyword>
<keyword id="KW-0349">Heme</keyword>
<keyword id="KW-0408">Iron</keyword>
<keyword id="KW-0411">Iron-sulfur</keyword>
<keyword id="KW-0479">Metal-binding</keyword>
<keyword id="KW-0521">NADP</keyword>
<keyword id="KW-0560">Oxidoreductase</keyword>
<keyword id="KW-1185">Reference proteome</keyword>
<accession>Q65L57</accession>
<accession>Q62WJ8</accession>
<proteinExistence type="inferred from homology"/>